<feature type="chain" id="PRO_0000215847" description="Cysteine protease ATG4B">
    <location>
        <begin position="1"/>
        <end position="394"/>
    </location>
</feature>
<feature type="short sequence motif" description="LIR" evidence="1">
    <location>
        <begin position="389"/>
        <end position="392"/>
    </location>
</feature>
<feature type="active site" description="Nucleophile" evidence="1">
    <location>
        <position position="74"/>
    </location>
</feature>
<feature type="active site" evidence="1">
    <location>
        <position position="280"/>
    </location>
</feature>
<feature type="active site" evidence="1">
    <location>
        <position position="282"/>
    </location>
</feature>
<proteinExistence type="evidence at transcript level"/>
<organism>
    <name type="scientific">Danio rerio</name>
    <name type="common">Zebrafish</name>
    <name type="synonym">Brachydanio rerio</name>
    <dbReference type="NCBI Taxonomy" id="7955"/>
    <lineage>
        <taxon>Eukaryota</taxon>
        <taxon>Metazoa</taxon>
        <taxon>Chordata</taxon>
        <taxon>Craniata</taxon>
        <taxon>Vertebrata</taxon>
        <taxon>Euteleostomi</taxon>
        <taxon>Actinopterygii</taxon>
        <taxon>Neopterygii</taxon>
        <taxon>Teleostei</taxon>
        <taxon>Ostariophysi</taxon>
        <taxon>Cypriniformes</taxon>
        <taxon>Danionidae</taxon>
        <taxon>Danioninae</taxon>
        <taxon>Danio</taxon>
    </lineage>
</organism>
<dbReference type="EC" id="3.4.22.-" evidence="1"/>
<dbReference type="EMBL" id="BC076463">
    <property type="protein sequence ID" value="AAH76463.1"/>
    <property type="molecule type" value="mRNA"/>
</dbReference>
<dbReference type="SMR" id="Q6DG88"/>
<dbReference type="FunCoup" id="Q6DG88">
    <property type="interactions" value="1687"/>
</dbReference>
<dbReference type="STRING" id="7955.ENSDARP00000106508"/>
<dbReference type="MEROPS" id="C54.003"/>
<dbReference type="PaxDb" id="7955-ENSDARP00000106508"/>
<dbReference type="Ensembl" id="ENSDART00000121558">
    <property type="protein sequence ID" value="ENSDARP00000106508"/>
    <property type="gene ID" value="ENSDARG00000052104"/>
</dbReference>
<dbReference type="AGR" id="ZFIN:ZDB-GENE-040917-3"/>
<dbReference type="ZFIN" id="ZDB-GENE-040917-3">
    <property type="gene designation" value="atg4b"/>
</dbReference>
<dbReference type="eggNOG" id="KOG2674">
    <property type="taxonomic scope" value="Eukaryota"/>
</dbReference>
<dbReference type="HOGENOM" id="CLU_021259_0_1_1"/>
<dbReference type="InParanoid" id="Q6DG88"/>
<dbReference type="OMA" id="PDETFHC"/>
<dbReference type="PhylomeDB" id="Q6DG88"/>
<dbReference type="TreeFam" id="TF314847"/>
<dbReference type="Reactome" id="R-DRE-1632852">
    <property type="pathway name" value="Macroautophagy"/>
</dbReference>
<dbReference type="PRO" id="PR:Q6DG88"/>
<dbReference type="Proteomes" id="UP000000437">
    <property type="component" value="Unplaced"/>
</dbReference>
<dbReference type="Bgee" id="ENSDARG00000052104">
    <property type="expression patterns" value="Expressed in mature ovarian follicle and 22 other cell types or tissues"/>
</dbReference>
<dbReference type="ExpressionAtlas" id="Q6DG88">
    <property type="expression patterns" value="baseline and differential"/>
</dbReference>
<dbReference type="GO" id="GO:0005776">
    <property type="term" value="C:autophagosome"/>
    <property type="evidence" value="ECO:0007669"/>
    <property type="project" value="UniProtKB-SubCell"/>
</dbReference>
<dbReference type="GO" id="GO:0005737">
    <property type="term" value="C:cytoplasm"/>
    <property type="evidence" value="ECO:0000318"/>
    <property type="project" value="GO_Central"/>
</dbReference>
<dbReference type="GO" id="GO:0031410">
    <property type="term" value="C:cytoplasmic vesicle"/>
    <property type="evidence" value="ECO:0007669"/>
    <property type="project" value="UniProtKB-KW"/>
</dbReference>
<dbReference type="GO" id="GO:0005829">
    <property type="term" value="C:cytosol"/>
    <property type="evidence" value="ECO:0007669"/>
    <property type="project" value="UniProtKB-SubCell"/>
</dbReference>
<dbReference type="GO" id="GO:0005783">
    <property type="term" value="C:endoplasmic reticulum"/>
    <property type="evidence" value="ECO:0007669"/>
    <property type="project" value="UniProtKB-SubCell"/>
</dbReference>
<dbReference type="GO" id="GO:0005739">
    <property type="term" value="C:mitochondrion"/>
    <property type="evidence" value="ECO:0007669"/>
    <property type="project" value="UniProtKB-SubCell"/>
</dbReference>
<dbReference type="GO" id="GO:0004197">
    <property type="term" value="F:cysteine-type endopeptidase activity"/>
    <property type="evidence" value="ECO:0000318"/>
    <property type="project" value="GO_Central"/>
</dbReference>
<dbReference type="GO" id="GO:0019786">
    <property type="term" value="F:protein-phosphatidylethanolamide deconjugating activity"/>
    <property type="evidence" value="ECO:0000318"/>
    <property type="project" value="GO_Central"/>
</dbReference>
<dbReference type="GO" id="GO:0035973">
    <property type="term" value="P:aggrephagy"/>
    <property type="evidence" value="ECO:0000318"/>
    <property type="project" value="GO_Central"/>
</dbReference>
<dbReference type="GO" id="GO:0000045">
    <property type="term" value="P:autophagosome assembly"/>
    <property type="evidence" value="ECO:0000318"/>
    <property type="project" value="GO_Central"/>
</dbReference>
<dbReference type="GO" id="GO:0006914">
    <property type="term" value="P:autophagy"/>
    <property type="evidence" value="ECO:0000250"/>
    <property type="project" value="UniProtKB"/>
</dbReference>
<dbReference type="GO" id="GO:0016237">
    <property type="term" value="P:microautophagy"/>
    <property type="evidence" value="ECO:0000250"/>
    <property type="project" value="UniProtKB"/>
</dbReference>
<dbReference type="GO" id="GO:0000423">
    <property type="term" value="P:mitophagy"/>
    <property type="evidence" value="ECO:0000250"/>
    <property type="project" value="UniProtKB"/>
</dbReference>
<dbReference type="GO" id="GO:0031173">
    <property type="term" value="P:otolith mineralization completed early in development"/>
    <property type="evidence" value="ECO:0000250"/>
    <property type="project" value="UniProtKB"/>
</dbReference>
<dbReference type="GO" id="GO:0034727">
    <property type="term" value="P:piecemeal microautophagy of the nucleus"/>
    <property type="evidence" value="ECO:0000318"/>
    <property type="project" value="GO_Central"/>
</dbReference>
<dbReference type="GO" id="GO:0016485">
    <property type="term" value="P:protein processing"/>
    <property type="evidence" value="ECO:0000318"/>
    <property type="project" value="GO_Central"/>
</dbReference>
<dbReference type="GO" id="GO:0015031">
    <property type="term" value="P:protein transport"/>
    <property type="evidence" value="ECO:0007669"/>
    <property type="project" value="UniProtKB-KW"/>
</dbReference>
<dbReference type="InterPro" id="IPR046793">
    <property type="entry name" value="ATG4_LIR"/>
</dbReference>
<dbReference type="InterPro" id="IPR038765">
    <property type="entry name" value="Papain-like_cys_pep_sf"/>
</dbReference>
<dbReference type="InterPro" id="IPR005078">
    <property type="entry name" value="Peptidase_C54"/>
</dbReference>
<dbReference type="InterPro" id="IPR046792">
    <property type="entry name" value="Peptidase_C54_cat"/>
</dbReference>
<dbReference type="PANTHER" id="PTHR22624">
    <property type="entry name" value="CYSTEINE PROTEASE ATG4"/>
    <property type="match status" value="1"/>
</dbReference>
<dbReference type="PANTHER" id="PTHR22624:SF39">
    <property type="entry name" value="CYSTEINE PROTEASE ATG4B"/>
    <property type="match status" value="1"/>
</dbReference>
<dbReference type="Pfam" id="PF20166">
    <property type="entry name" value="ATG4_LIR"/>
    <property type="match status" value="1"/>
</dbReference>
<dbReference type="Pfam" id="PF03416">
    <property type="entry name" value="Peptidase_C54"/>
    <property type="match status" value="1"/>
</dbReference>
<dbReference type="SUPFAM" id="SSF54001">
    <property type="entry name" value="Cysteine proteinases"/>
    <property type="match status" value="1"/>
</dbReference>
<comment type="function">
    <text evidence="1">Cysteine protease that plays a key role in autophagy by mediating both proteolytic activation and delipidation of ATG8 family proteins. Required for canonical autophagy (macroautophagy), non-canonical autophagy as well as for mitophagy. The protease activity is required for proteolytic activation of ATG8 family proteins: cleaves the C-terminal amino acid of ATG8 proteins to reveal a C-terminal glycine. Exposure of the glycine at the C-terminus is essential for ATG8 proteins conjugation to phosphatidylethanolamine (PE) and insertion to membranes, which is necessary for autophagy. Protease activity is also required to counteract formation of high-molecular weight conjugates of ATG8 proteins (ATG8ylation): acts as a deubiquitinating-like enzyme that removes ATG8 conjugated to other proteins, such as ATG3. In addition to the protease activity, also mediates delipidation of ATG8 family proteins. Catalyzes delipidation of PE-conjugated forms of ATG8 proteins during macroautophagy. Also involved in non-canonical autophagy, a parallel pathway involving conjugation of ATG8 proteins to single membranes at endolysosomal compartments, by catalyzing delipidation of ATG8 proteins conjugated to phosphatidylserine (PS).</text>
</comment>
<comment type="catalytic activity">
    <reaction evidence="1">
        <text>[protein]-C-terminal L-amino acid-glycyl-phosphatidylethanolamide + H2O = [protein]-C-terminal L-amino acid-glycine + a 1,2-diacyl-sn-glycero-3-phosphoethanolamine</text>
        <dbReference type="Rhea" id="RHEA:67548"/>
        <dbReference type="Rhea" id="RHEA-COMP:17323"/>
        <dbReference type="Rhea" id="RHEA-COMP:17324"/>
        <dbReference type="ChEBI" id="CHEBI:15377"/>
        <dbReference type="ChEBI" id="CHEBI:64612"/>
        <dbReference type="ChEBI" id="CHEBI:172940"/>
        <dbReference type="ChEBI" id="CHEBI:172941"/>
    </reaction>
    <physiologicalReaction direction="left-to-right" evidence="1">
        <dbReference type="Rhea" id="RHEA:67549"/>
    </physiologicalReaction>
</comment>
<comment type="catalytic activity">
    <reaction evidence="1">
        <text>[protein]-C-terminal L-amino acid-glycyl-phosphatidylserine + H2O = [protein]-C-terminal L-amino acid-glycine + a 1,2-diacyl-sn-glycero-3-phospho-L-serine</text>
        <dbReference type="Rhea" id="RHEA:67576"/>
        <dbReference type="Rhea" id="RHEA-COMP:17324"/>
        <dbReference type="Rhea" id="RHEA-COMP:17326"/>
        <dbReference type="ChEBI" id="CHEBI:15377"/>
        <dbReference type="ChEBI" id="CHEBI:57262"/>
        <dbReference type="ChEBI" id="CHEBI:172940"/>
        <dbReference type="ChEBI" id="CHEBI:172942"/>
    </reaction>
    <physiologicalReaction direction="left-to-right" evidence="1">
        <dbReference type="Rhea" id="RHEA:67577"/>
    </physiologicalReaction>
</comment>
<comment type="subcellular location">
    <subcellularLocation>
        <location evidence="1">Cytoplasm</location>
    </subcellularLocation>
    <subcellularLocation>
        <location evidence="1">Cytoplasm</location>
        <location evidence="1">Cytosol</location>
    </subcellularLocation>
    <subcellularLocation>
        <location evidence="1">Cytoplasmic vesicle</location>
        <location evidence="1">Autophagosome</location>
    </subcellularLocation>
    <subcellularLocation>
        <location evidence="1">Endoplasmic reticulum</location>
    </subcellularLocation>
    <subcellularLocation>
        <location evidence="1">Mitochondrion</location>
    </subcellularLocation>
    <text evidence="1">Mainly localizes to the cytoplasm, including cytosol.</text>
</comment>
<comment type="domain">
    <text evidence="1">The LIR motif (LC3-interacting region) is required for the interaction with ATG8 family proteins. Required for proteolytic activation and delipidation of ATG8 proteins.</text>
</comment>
<comment type="similarity">
    <text evidence="2">Belongs to the peptidase C54 family.</text>
</comment>
<protein>
    <recommendedName>
        <fullName evidence="2">Cysteine protease ATG4B</fullName>
        <ecNumber evidence="1">3.4.22.-</ecNumber>
    </recommendedName>
    <alternativeName>
        <fullName evidence="1">Autophagy-related protein 4 homolog B</fullName>
    </alternativeName>
</protein>
<keyword id="KW-0072">Autophagy</keyword>
<keyword id="KW-0963">Cytoplasm</keyword>
<keyword id="KW-0968">Cytoplasmic vesicle</keyword>
<keyword id="KW-0256">Endoplasmic reticulum</keyword>
<keyword id="KW-0378">Hydrolase</keyword>
<keyword id="KW-0496">Mitochondrion</keyword>
<keyword id="KW-0645">Protease</keyword>
<keyword id="KW-0653">Protein transport</keyword>
<keyword id="KW-1185">Reference proteome</keyword>
<keyword id="KW-0788">Thiol protease</keyword>
<keyword id="KW-0813">Transport</keyword>
<keyword id="KW-0833">Ubl conjugation pathway</keyword>
<reference key="1">
    <citation type="submission" date="2004-07" db="EMBL/GenBank/DDBJ databases">
        <authorList>
            <consortium name="NIH - Zebrafish Gene Collection (ZGC) project"/>
        </authorList>
    </citation>
    <scope>NUCLEOTIDE SEQUENCE [LARGE SCALE MRNA]</scope>
</reference>
<gene>
    <name evidence="1" type="primary">atg4b</name>
    <name evidence="1" type="synonym">apg4b</name>
</gene>
<sequence length="394" mass="44453">MDAATLTYDSLRFGEIEDFPETSDPVWILGKQFSALTEKDDILADVTSRLWFTYRKNFQPIGGTGPTSDTGWGCMLRCGQMILGEALICRHLGRDWKWSPGQRQRPEYVSILNAFIDKKDSYYSIHQIAQMGVGEGKSIGQWYGPNTVAQVLKKLAVFDSWSRLAVHVAMDNTVVIEEIKRLCMPWLDFDRGACAVSEEPREMNGDLEGACALAEEETALWKPLVLLIPLRLGLSDINEAYIEPLKQCFMMPQSLGVIGGKPNSAHYFIGFVGDELIYLDPHTTQPAVDPSEDGHFPDDSYHCQHPPCRMHICELDPSIAAGFFCQTEDDFDDWCAQIRKVSNCRGLPMFELVDSQPSHLITADVLNLTPDFSDSDRLERFFDSEDEEFEILSL</sequence>
<name>ATG4B_DANRE</name>
<accession>Q6DG88</accession>
<evidence type="ECO:0000250" key="1">
    <source>
        <dbReference type="UniProtKB" id="Q9Y4P1"/>
    </source>
</evidence>
<evidence type="ECO:0000305" key="2"/>